<evidence type="ECO:0000255" key="1">
    <source>
        <dbReference type="HAMAP-Rule" id="MF_00451"/>
    </source>
</evidence>
<organism>
    <name type="scientific">Thermoplasma acidophilum (strain ATCC 25905 / DSM 1728 / JCM 9062 / NBRC 15155 / AMRC-C165)</name>
    <dbReference type="NCBI Taxonomy" id="273075"/>
    <lineage>
        <taxon>Archaea</taxon>
        <taxon>Methanobacteriati</taxon>
        <taxon>Thermoplasmatota</taxon>
        <taxon>Thermoplasmata</taxon>
        <taxon>Thermoplasmatales</taxon>
        <taxon>Thermoplasmataceae</taxon>
        <taxon>Thermoplasma</taxon>
    </lineage>
</organism>
<feature type="chain" id="PRO_0000137104" description="Nucleoside diphosphate kinase">
    <location>
        <begin position="1"/>
        <end position="148"/>
    </location>
</feature>
<feature type="active site" description="Pros-phosphohistidine intermediate" evidence="1">
    <location>
        <position position="116"/>
    </location>
</feature>
<feature type="binding site" evidence="1">
    <location>
        <position position="10"/>
    </location>
    <ligand>
        <name>ATP</name>
        <dbReference type="ChEBI" id="CHEBI:30616"/>
    </ligand>
</feature>
<feature type="binding site" evidence="1">
    <location>
        <position position="58"/>
    </location>
    <ligand>
        <name>ATP</name>
        <dbReference type="ChEBI" id="CHEBI:30616"/>
    </ligand>
</feature>
<feature type="binding site" evidence="1">
    <location>
        <position position="86"/>
    </location>
    <ligand>
        <name>ATP</name>
        <dbReference type="ChEBI" id="CHEBI:30616"/>
    </ligand>
</feature>
<feature type="binding site" evidence="1">
    <location>
        <position position="92"/>
    </location>
    <ligand>
        <name>ATP</name>
        <dbReference type="ChEBI" id="CHEBI:30616"/>
    </ligand>
</feature>
<feature type="binding site" evidence="1">
    <location>
        <position position="103"/>
    </location>
    <ligand>
        <name>ATP</name>
        <dbReference type="ChEBI" id="CHEBI:30616"/>
    </ligand>
</feature>
<feature type="binding site" evidence="1">
    <location>
        <position position="113"/>
    </location>
    <ligand>
        <name>ATP</name>
        <dbReference type="ChEBI" id="CHEBI:30616"/>
    </ligand>
</feature>
<sequence length="148" mass="16657">MTERTLVLLKPDAVKRRLIGRIISRLEDKGLKVVALKFMQMTKDQAENHYSVHRSKPFFKDLVTYITSGPIVAMVLEGPKAIEVVRILAGSTDGSKAQPGTIRGDFSMGIEKNIIHASDSPEAYSHEMPIFFNESEIVEWSYGDEIIY</sequence>
<reference key="1">
    <citation type="journal article" date="2000" name="Nature">
        <title>The genome sequence of the thermoacidophilic scavenger Thermoplasma acidophilum.</title>
        <authorList>
            <person name="Ruepp A."/>
            <person name="Graml W."/>
            <person name="Santos-Martinez M.-L."/>
            <person name="Koretke K.K."/>
            <person name="Volker C."/>
            <person name="Mewes H.-W."/>
            <person name="Frishman D."/>
            <person name="Stocker S."/>
            <person name="Lupas A.N."/>
            <person name="Baumeister W."/>
        </authorList>
    </citation>
    <scope>NUCLEOTIDE SEQUENCE [LARGE SCALE GENOMIC DNA]</scope>
    <source>
        <strain>ATCC 25905 / DSM 1728 / JCM 9062 / NBRC 15155 / AMRC-C165</strain>
    </source>
</reference>
<gene>
    <name evidence="1" type="primary">ndk</name>
    <name type="ordered locus">Ta1113</name>
</gene>
<comment type="function">
    <text evidence="1">Major role in the synthesis of nucleoside triphosphates other than ATP. The ATP gamma phosphate is transferred to the NDP beta phosphate via a ping-pong mechanism, using a phosphorylated active-site intermediate.</text>
</comment>
<comment type="catalytic activity">
    <reaction evidence="1">
        <text>a 2'-deoxyribonucleoside 5'-diphosphate + ATP = a 2'-deoxyribonucleoside 5'-triphosphate + ADP</text>
        <dbReference type="Rhea" id="RHEA:44640"/>
        <dbReference type="ChEBI" id="CHEBI:30616"/>
        <dbReference type="ChEBI" id="CHEBI:61560"/>
        <dbReference type="ChEBI" id="CHEBI:73316"/>
        <dbReference type="ChEBI" id="CHEBI:456216"/>
        <dbReference type="EC" id="2.7.4.6"/>
    </reaction>
</comment>
<comment type="catalytic activity">
    <reaction evidence="1">
        <text>a ribonucleoside 5'-diphosphate + ATP = a ribonucleoside 5'-triphosphate + ADP</text>
        <dbReference type="Rhea" id="RHEA:18113"/>
        <dbReference type="ChEBI" id="CHEBI:30616"/>
        <dbReference type="ChEBI" id="CHEBI:57930"/>
        <dbReference type="ChEBI" id="CHEBI:61557"/>
        <dbReference type="ChEBI" id="CHEBI:456216"/>
        <dbReference type="EC" id="2.7.4.6"/>
    </reaction>
</comment>
<comment type="cofactor">
    <cofactor evidence="1">
        <name>Mg(2+)</name>
        <dbReference type="ChEBI" id="CHEBI:18420"/>
    </cofactor>
</comment>
<comment type="subcellular location">
    <subcellularLocation>
        <location evidence="1">Cytoplasm</location>
    </subcellularLocation>
</comment>
<comment type="similarity">
    <text evidence="1">Belongs to the NDK family.</text>
</comment>
<accession>Q9HJ59</accession>
<protein>
    <recommendedName>
        <fullName evidence="1">Nucleoside diphosphate kinase</fullName>
        <shortName evidence="1">NDK</shortName>
        <shortName evidence="1">NDP kinase</shortName>
        <ecNumber evidence="1">2.7.4.6</ecNumber>
    </recommendedName>
    <alternativeName>
        <fullName evidence="1">Nucleoside-2-P kinase</fullName>
    </alternativeName>
</protein>
<keyword id="KW-0067">ATP-binding</keyword>
<keyword id="KW-0963">Cytoplasm</keyword>
<keyword id="KW-0418">Kinase</keyword>
<keyword id="KW-0460">Magnesium</keyword>
<keyword id="KW-0479">Metal-binding</keyword>
<keyword id="KW-0546">Nucleotide metabolism</keyword>
<keyword id="KW-0547">Nucleotide-binding</keyword>
<keyword id="KW-0597">Phosphoprotein</keyword>
<keyword id="KW-1185">Reference proteome</keyword>
<keyword id="KW-0808">Transferase</keyword>
<proteinExistence type="inferred from homology"/>
<name>NDK_THEAC</name>
<dbReference type="EC" id="2.7.4.6" evidence="1"/>
<dbReference type="EMBL" id="AL445066">
    <property type="protein sequence ID" value="CAC12240.1"/>
    <property type="molecule type" value="Genomic_DNA"/>
</dbReference>
<dbReference type="RefSeq" id="WP_010901523.1">
    <property type="nucleotide sequence ID" value="NC_002578.1"/>
</dbReference>
<dbReference type="SMR" id="Q9HJ59"/>
<dbReference type="FunCoup" id="Q9HJ59">
    <property type="interactions" value="217"/>
</dbReference>
<dbReference type="STRING" id="273075.gene:9572334"/>
<dbReference type="PaxDb" id="273075-Ta1113"/>
<dbReference type="EnsemblBacteria" id="CAC12240">
    <property type="protein sequence ID" value="CAC12240"/>
    <property type="gene ID" value="CAC12240"/>
</dbReference>
<dbReference type="KEGG" id="tac:Ta1113"/>
<dbReference type="eggNOG" id="arCOG04313">
    <property type="taxonomic scope" value="Archaea"/>
</dbReference>
<dbReference type="HOGENOM" id="CLU_060216_6_3_2"/>
<dbReference type="InParanoid" id="Q9HJ59"/>
<dbReference type="OrthoDB" id="6874at2157"/>
<dbReference type="Proteomes" id="UP000001024">
    <property type="component" value="Chromosome"/>
</dbReference>
<dbReference type="GO" id="GO:0005737">
    <property type="term" value="C:cytoplasm"/>
    <property type="evidence" value="ECO:0007669"/>
    <property type="project" value="UniProtKB-SubCell"/>
</dbReference>
<dbReference type="GO" id="GO:0005524">
    <property type="term" value="F:ATP binding"/>
    <property type="evidence" value="ECO:0007669"/>
    <property type="project" value="UniProtKB-UniRule"/>
</dbReference>
<dbReference type="GO" id="GO:0046872">
    <property type="term" value="F:metal ion binding"/>
    <property type="evidence" value="ECO:0007669"/>
    <property type="project" value="UniProtKB-KW"/>
</dbReference>
<dbReference type="GO" id="GO:0004550">
    <property type="term" value="F:nucleoside diphosphate kinase activity"/>
    <property type="evidence" value="ECO:0007669"/>
    <property type="project" value="UniProtKB-UniRule"/>
</dbReference>
<dbReference type="GO" id="GO:0006241">
    <property type="term" value="P:CTP biosynthetic process"/>
    <property type="evidence" value="ECO:0007669"/>
    <property type="project" value="UniProtKB-UniRule"/>
</dbReference>
<dbReference type="GO" id="GO:0006183">
    <property type="term" value="P:GTP biosynthetic process"/>
    <property type="evidence" value="ECO:0007669"/>
    <property type="project" value="UniProtKB-UniRule"/>
</dbReference>
<dbReference type="GO" id="GO:0006228">
    <property type="term" value="P:UTP biosynthetic process"/>
    <property type="evidence" value="ECO:0007669"/>
    <property type="project" value="UniProtKB-UniRule"/>
</dbReference>
<dbReference type="CDD" id="cd04413">
    <property type="entry name" value="NDPk_I"/>
    <property type="match status" value="1"/>
</dbReference>
<dbReference type="FunFam" id="3.30.70.141:FF:000003">
    <property type="entry name" value="Nucleoside diphosphate kinase"/>
    <property type="match status" value="1"/>
</dbReference>
<dbReference type="Gene3D" id="3.30.70.141">
    <property type="entry name" value="Nucleoside diphosphate kinase-like domain"/>
    <property type="match status" value="1"/>
</dbReference>
<dbReference type="HAMAP" id="MF_00451">
    <property type="entry name" value="NDP_kinase"/>
    <property type="match status" value="1"/>
</dbReference>
<dbReference type="InterPro" id="IPR034907">
    <property type="entry name" value="NDK-like_dom"/>
</dbReference>
<dbReference type="InterPro" id="IPR036850">
    <property type="entry name" value="NDK-like_dom_sf"/>
</dbReference>
<dbReference type="InterPro" id="IPR001564">
    <property type="entry name" value="Nucleoside_diP_kinase"/>
</dbReference>
<dbReference type="InterPro" id="IPR023005">
    <property type="entry name" value="Nucleoside_diP_kinase_AS"/>
</dbReference>
<dbReference type="NCBIfam" id="NF001908">
    <property type="entry name" value="PRK00668.1"/>
    <property type="match status" value="1"/>
</dbReference>
<dbReference type="PANTHER" id="PTHR11349">
    <property type="entry name" value="NUCLEOSIDE DIPHOSPHATE KINASE"/>
    <property type="match status" value="1"/>
</dbReference>
<dbReference type="Pfam" id="PF00334">
    <property type="entry name" value="NDK"/>
    <property type="match status" value="1"/>
</dbReference>
<dbReference type="PRINTS" id="PR01243">
    <property type="entry name" value="NUCDPKINASE"/>
</dbReference>
<dbReference type="SMART" id="SM00562">
    <property type="entry name" value="NDK"/>
    <property type="match status" value="1"/>
</dbReference>
<dbReference type="SUPFAM" id="SSF54919">
    <property type="entry name" value="Nucleoside diphosphate kinase, NDK"/>
    <property type="match status" value="1"/>
</dbReference>
<dbReference type="PROSITE" id="PS00469">
    <property type="entry name" value="NDPK"/>
    <property type="match status" value="1"/>
</dbReference>
<dbReference type="PROSITE" id="PS51374">
    <property type="entry name" value="NDPK_LIKE"/>
    <property type="match status" value="1"/>
</dbReference>